<sequence>MAKILTIVMLVFVSMAGWMFGADTGSIGGITNMRDFQSRYADRYDPVTDTYSYSSARQGLLVGMVNTGTTVGCLLSSPLGDRFGKRKCIMGWTLVYITGVIVQLTTIPSWVQMMVAKIWTGLGIGALSVIAPGYQSESSPPHIRGAIVTTYQLFITLGIFIAACINMGTHKYTTHPEAQWRVPIGINLLWGILMFFGMLFLPESPRYLAVKGRNEECMKILTRNAGLPADHPIMQKEYNAIQADVEAELAGGPCSWPQIFSNEIRYRTLLGMGVMAFQQLTGNNYFFYYGTQVFRGTGLNSPFLAALILDAVNFGCTFGAIFVLEYFGRRGPLIVGGVWQSICFFIYASVGDRALTRPNGTSNHRAGAVMIVFSCLFIFSFAQTWAPAAYVIVGESYPIRYRSKCAAVATASNWFWNFMISFFTPFISNSIGFKYGYVFAACNLCAAIIIFLFAKETKGLTLEEINQLYLSNIKPWNTGAYQRDREDIKQSDSEKERGPTSKLHEYVEHAPNSYASTHSTESENYPQQVTNPVGL</sequence>
<gene>
    <name type="primary">ght6</name>
    <name type="synonym">meu12</name>
    <name type="ORF">SPCC1235.13</name>
</gene>
<name>GHT6_SCHPO</name>
<feature type="chain" id="PRO_0000050414" description="High-affinity fructose transporter ght6">
    <location>
        <begin position="1"/>
        <end position="535"/>
    </location>
</feature>
<feature type="topological domain" description="Cytoplasmic" evidence="1">
    <location>
        <begin position="1"/>
        <end position="9"/>
    </location>
</feature>
<feature type="transmembrane region" description="Helical; Name=1" evidence="1">
    <location>
        <begin position="10"/>
        <end position="30"/>
    </location>
</feature>
<feature type="topological domain" description="Extracellular" evidence="1">
    <location>
        <begin position="31"/>
        <end position="58"/>
    </location>
</feature>
<feature type="transmembrane region" description="Helical; Name=2" evidence="1">
    <location>
        <begin position="59"/>
        <end position="79"/>
    </location>
</feature>
<feature type="topological domain" description="Cytoplasmic" evidence="1">
    <location>
        <begin position="80"/>
        <end position="87"/>
    </location>
</feature>
<feature type="transmembrane region" description="Helical; Name=3" evidence="1">
    <location>
        <begin position="88"/>
        <end position="108"/>
    </location>
</feature>
<feature type="topological domain" description="Extracellular" evidence="1">
    <location>
        <begin position="109"/>
        <end position="112"/>
    </location>
</feature>
<feature type="transmembrane region" description="Helical; Name=4" evidence="1">
    <location>
        <begin position="113"/>
        <end position="133"/>
    </location>
</feature>
<feature type="topological domain" description="Cytoplasmic" evidence="1">
    <location>
        <begin position="134"/>
        <end position="144"/>
    </location>
</feature>
<feature type="transmembrane region" description="Helical; Name=5" evidence="1">
    <location>
        <begin position="145"/>
        <end position="165"/>
    </location>
</feature>
<feature type="topological domain" description="Extracellular" evidence="1">
    <location>
        <begin position="166"/>
        <end position="181"/>
    </location>
</feature>
<feature type="transmembrane region" description="Helical; Name=6" evidence="1">
    <location>
        <begin position="182"/>
        <end position="202"/>
    </location>
</feature>
<feature type="topological domain" description="Cytoplasmic" evidence="1">
    <location>
        <begin position="203"/>
        <end position="268"/>
    </location>
</feature>
<feature type="transmembrane region" description="Helical; Name=7" evidence="1">
    <location>
        <begin position="269"/>
        <end position="287"/>
    </location>
</feature>
<feature type="topological domain" description="Extracellular" evidence="1">
    <location>
        <begin position="288"/>
        <end position="303"/>
    </location>
</feature>
<feature type="transmembrane region" description="Helical; Name=8" evidence="1">
    <location>
        <begin position="304"/>
        <end position="324"/>
    </location>
</feature>
<feature type="topological domain" description="Cytoplasmic" evidence="1">
    <location>
        <begin position="325"/>
        <end position="330"/>
    </location>
</feature>
<feature type="transmembrane region" description="Helical; Name=9" evidence="1">
    <location>
        <begin position="331"/>
        <end position="351"/>
    </location>
</feature>
<feature type="topological domain" description="Extracellular" evidence="1">
    <location>
        <begin position="352"/>
        <end position="365"/>
    </location>
</feature>
<feature type="transmembrane region" description="Helical; Name=10" evidence="1">
    <location>
        <begin position="366"/>
        <end position="386"/>
    </location>
</feature>
<feature type="topological domain" description="Cytoplasmic" evidence="1">
    <location>
        <begin position="387"/>
        <end position="406"/>
    </location>
</feature>
<feature type="transmembrane region" description="Helical; Name=11" evidence="1">
    <location>
        <begin position="407"/>
        <end position="427"/>
    </location>
</feature>
<feature type="topological domain" description="Extracellular" evidence="1">
    <location>
        <begin position="428"/>
        <end position="434"/>
    </location>
</feature>
<feature type="transmembrane region" description="Helical; Name=12" evidence="1">
    <location>
        <begin position="435"/>
        <end position="455"/>
    </location>
</feature>
<feature type="topological domain" description="Cytoplasmic" evidence="1">
    <location>
        <begin position="456"/>
        <end position="535"/>
    </location>
</feature>
<feature type="region of interest" description="Disordered" evidence="2">
    <location>
        <begin position="484"/>
        <end position="535"/>
    </location>
</feature>
<feature type="compositionally biased region" description="Basic and acidic residues" evidence="2">
    <location>
        <begin position="484"/>
        <end position="508"/>
    </location>
</feature>
<feature type="compositionally biased region" description="Polar residues" evidence="2">
    <location>
        <begin position="513"/>
        <end position="535"/>
    </location>
</feature>
<feature type="glycosylation site" description="N-linked (GlcNAc...) asparagine" evidence="1">
    <location>
        <position position="359"/>
    </location>
</feature>
<protein>
    <recommendedName>
        <fullName>High-affinity fructose transporter ght6</fullName>
    </recommendedName>
    <alternativeName>
        <fullName>Hexose transporter 6</fullName>
    </alternativeName>
    <alternativeName>
        <fullName>Meiotic expression up-regulated protein 12</fullName>
    </alternativeName>
</protein>
<keyword id="KW-0325">Glycoprotein</keyword>
<keyword id="KW-0469">Meiosis</keyword>
<keyword id="KW-0472">Membrane</keyword>
<keyword id="KW-1185">Reference proteome</keyword>
<keyword id="KW-0762">Sugar transport</keyword>
<keyword id="KW-0812">Transmembrane</keyword>
<keyword id="KW-1133">Transmembrane helix</keyword>
<keyword id="KW-0813">Transport</keyword>
<reference key="1">
    <citation type="journal article" date="2000" name="J. Bacteriol.">
        <title>Multiple hexose transporters of Schizosaccharomyces pombe.</title>
        <authorList>
            <person name="Heiland S."/>
            <person name="Radovanovic N."/>
            <person name="Hoefer M."/>
            <person name="Winderickx J."/>
            <person name="Lichtenberg H."/>
        </authorList>
    </citation>
    <scope>NUCLEOTIDE SEQUENCE [GENOMIC DNA]</scope>
    <scope>CHARACTERIZATION</scope>
    <source>
        <strain>972 / ATCC 24843</strain>
    </source>
</reference>
<reference key="2">
    <citation type="journal article" date="2002" name="Nature">
        <title>The genome sequence of Schizosaccharomyces pombe.</title>
        <authorList>
            <person name="Wood V."/>
            <person name="Gwilliam R."/>
            <person name="Rajandream M.A."/>
            <person name="Lyne M.H."/>
            <person name="Lyne R."/>
            <person name="Stewart A."/>
            <person name="Sgouros J.G."/>
            <person name="Peat N."/>
            <person name="Hayles J."/>
            <person name="Baker S.G."/>
            <person name="Basham D."/>
            <person name="Bowman S."/>
            <person name="Brooks K."/>
            <person name="Brown D."/>
            <person name="Brown S."/>
            <person name="Chillingworth T."/>
            <person name="Churcher C.M."/>
            <person name="Collins M."/>
            <person name="Connor R."/>
            <person name="Cronin A."/>
            <person name="Davis P."/>
            <person name="Feltwell T."/>
            <person name="Fraser A."/>
            <person name="Gentles S."/>
            <person name="Goble A."/>
            <person name="Hamlin N."/>
            <person name="Harris D.E."/>
            <person name="Hidalgo J."/>
            <person name="Hodgson G."/>
            <person name="Holroyd S."/>
            <person name="Hornsby T."/>
            <person name="Howarth S."/>
            <person name="Huckle E.J."/>
            <person name="Hunt S."/>
            <person name="Jagels K."/>
            <person name="James K.D."/>
            <person name="Jones L."/>
            <person name="Jones M."/>
            <person name="Leather S."/>
            <person name="McDonald S."/>
            <person name="McLean J."/>
            <person name="Mooney P."/>
            <person name="Moule S."/>
            <person name="Mungall K.L."/>
            <person name="Murphy L.D."/>
            <person name="Niblett D."/>
            <person name="Odell C."/>
            <person name="Oliver K."/>
            <person name="O'Neil S."/>
            <person name="Pearson D."/>
            <person name="Quail M.A."/>
            <person name="Rabbinowitsch E."/>
            <person name="Rutherford K.M."/>
            <person name="Rutter S."/>
            <person name="Saunders D."/>
            <person name="Seeger K."/>
            <person name="Sharp S."/>
            <person name="Skelton J."/>
            <person name="Simmonds M.N."/>
            <person name="Squares R."/>
            <person name="Squares S."/>
            <person name="Stevens K."/>
            <person name="Taylor K."/>
            <person name="Taylor R.G."/>
            <person name="Tivey A."/>
            <person name="Walsh S.V."/>
            <person name="Warren T."/>
            <person name="Whitehead S."/>
            <person name="Woodward J.R."/>
            <person name="Volckaert G."/>
            <person name="Aert R."/>
            <person name="Robben J."/>
            <person name="Grymonprez B."/>
            <person name="Weltjens I."/>
            <person name="Vanstreels E."/>
            <person name="Rieger M."/>
            <person name="Schaefer M."/>
            <person name="Mueller-Auer S."/>
            <person name="Gabel C."/>
            <person name="Fuchs M."/>
            <person name="Duesterhoeft A."/>
            <person name="Fritzc C."/>
            <person name="Holzer E."/>
            <person name="Moestl D."/>
            <person name="Hilbert H."/>
            <person name="Borzym K."/>
            <person name="Langer I."/>
            <person name="Beck A."/>
            <person name="Lehrach H."/>
            <person name="Reinhardt R."/>
            <person name="Pohl T.M."/>
            <person name="Eger P."/>
            <person name="Zimmermann W."/>
            <person name="Wedler H."/>
            <person name="Wambutt R."/>
            <person name="Purnelle B."/>
            <person name="Goffeau A."/>
            <person name="Cadieu E."/>
            <person name="Dreano S."/>
            <person name="Gloux S."/>
            <person name="Lelaure V."/>
            <person name="Mottier S."/>
            <person name="Galibert F."/>
            <person name="Aves S.J."/>
            <person name="Xiang Z."/>
            <person name="Hunt C."/>
            <person name="Moore K."/>
            <person name="Hurst S.M."/>
            <person name="Lucas M."/>
            <person name="Rochet M."/>
            <person name="Gaillardin C."/>
            <person name="Tallada V.A."/>
            <person name="Garzon A."/>
            <person name="Thode G."/>
            <person name="Daga R.R."/>
            <person name="Cruzado L."/>
            <person name="Jimenez J."/>
            <person name="Sanchez M."/>
            <person name="del Rey F."/>
            <person name="Benito J."/>
            <person name="Dominguez A."/>
            <person name="Revuelta J.L."/>
            <person name="Moreno S."/>
            <person name="Armstrong J."/>
            <person name="Forsburg S.L."/>
            <person name="Cerutti L."/>
            <person name="Lowe T."/>
            <person name="McCombie W.R."/>
            <person name="Paulsen I."/>
            <person name="Potashkin J."/>
            <person name="Shpakovski G.V."/>
            <person name="Ussery D."/>
            <person name="Barrell B.G."/>
            <person name="Nurse P."/>
        </authorList>
    </citation>
    <scope>NUCLEOTIDE SEQUENCE [LARGE SCALE GENOMIC DNA]</scope>
    <source>
        <strain>972 / ATCC 24843</strain>
    </source>
</reference>
<reference key="3">
    <citation type="journal article" date="2001" name="Nucleic Acids Res.">
        <title>Comprehensive isolation of meiosis-specific genes identifies novel proteins and unusual non-coding transcripts in Schizosaccharomyces pombe.</title>
        <authorList>
            <person name="Watanabe T."/>
            <person name="Miyashita K."/>
            <person name="Saito T.T."/>
            <person name="Yoneki T."/>
            <person name="Kakihara Y."/>
            <person name="Nabeshima K."/>
            <person name="Kishi Y.A."/>
            <person name="Shimoda C."/>
            <person name="Nojima H."/>
        </authorList>
    </citation>
    <scope>NUCLEOTIDE SEQUENCE [MRNA] OF 478-535</scope>
    <source>
        <strain>CD16-1</strain>
    </source>
</reference>
<proteinExistence type="evidence at protein level"/>
<organism>
    <name type="scientific">Schizosaccharomyces pombe (strain 972 / ATCC 24843)</name>
    <name type="common">Fission yeast</name>
    <dbReference type="NCBI Taxonomy" id="284812"/>
    <lineage>
        <taxon>Eukaryota</taxon>
        <taxon>Fungi</taxon>
        <taxon>Dikarya</taxon>
        <taxon>Ascomycota</taxon>
        <taxon>Taphrinomycotina</taxon>
        <taxon>Schizosaccharomycetes</taxon>
        <taxon>Schizosaccharomycetales</taxon>
        <taxon>Schizosaccharomycetaceae</taxon>
        <taxon>Schizosaccharomyces</taxon>
    </lineage>
</organism>
<comment type="function">
    <text>High-affinity fructose transporter.</text>
</comment>
<comment type="subcellular location">
    <subcellularLocation>
        <location>Membrane</location>
        <topology>Multi-pass membrane protein</topology>
    </subcellularLocation>
</comment>
<comment type="similarity">
    <text evidence="3">Belongs to the major facilitator superfamily. Sugar transporter (TC 2.A.1.1) family.</text>
</comment>
<evidence type="ECO:0000255" key="1"/>
<evidence type="ECO:0000256" key="2">
    <source>
        <dbReference type="SAM" id="MobiDB-lite"/>
    </source>
</evidence>
<evidence type="ECO:0000305" key="3"/>
<dbReference type="EMBL" id="AF098076">
    <property type="protein sequence ID" value="AAC64976.1"/>
    <property type="molecule type" value="Genomic_DNA"/>
</dbReference>
<dbReference type="EMBL" id="CU329672">
    <property type="protein sequence ID" value="CAA21117.1"/>
    <property type="molecule type" value="Genomic_DNA"/>
</dbReference>
<dbReference type="EMBL" id="AB054532">
    <property type="protein sequence ID" value="BAB60886.1"/>
    <property type="molecule type" value="mRNA"/>
</dbReference>
<dbReference type="PIR" id="T40887">
    <property type="entry name" value="T40887"/>
</dbReference>
<dbReference type="RefSeq" id="NP_587739.1">
    <property type="nucleotide sequence ID" value="NM_001022734.2"/>
</dbReference>
<dbReference type="SMR" id="O74849"/>
<dbReference type="BioGRID" id="275426">
    <property type="interactions" value="14"/>
</dbReference>
<dbReference type="FunCoup" id="O74849">
    <property type="interactions" value="324"/>
</dbReference>
<dbReference type="STRING" id="284812.O74849"/>
<dbReference type="TCDB" id="2.A.1.1.22">
    <property type="family name" value="the major facilitator superfamily (mfs)"/>
</dbReference>
<dbReference type="GlyCosmos" id="O74849">
    <property type="glycosylation" value="1 site, No reported glycans"/>
</dbReference>
<dbReference type="PaxDb" id="4896-SPCC1235.13.1"/>
<dbReference type="EnsemblFungi" id="SPCC1235.13.1">
    <property type="protein sequence ID" value="SPCC1235.13.1:pep"/>
    <property type="gene ID" value="SPCC1235.13"/>
</dbReference>
<dbReference type="GeneID" id="2538845"/>
<dbReference type="KEGG" id="spo:2538845"/>
<dbReference type="PomBase" id="SPCC1235.13">
    <property type="gene designation" value="ght6"/>
</dbReference>
<dbReference type="VEuPathDB" id="FungiDB:SPCC1235.13"/>
<dbReference type="eggNOG" id="KOG0254">
    <property type="taxonomic scope" value="Eukaryota"/>
</dbReference>
<dbReference type="HOGENOM" id="CLU_001265_30_1_1"/>
<dbReference type="InParanoid" id="O74849"/>
<dbReference type="OMA" id="MQKEYNA"/>
<dbReference type="PhylomeDB" id="O74849"/>
<dbReference type="PRO" id="PR:O74849"/>
<dbReference type="Proteomes" id="UP000002485">
    <property type="component" value="Chromosome III"/>
</dbReference>
<dbReference type="GO" id="GO:0032153">
    <property type="term" value="C:cell division site"/>
    <property type="evidence" value="ECO:0007005"/>
    <property type="project" value="PomBase"/>
</dbReference>
<dbReference type="GO" id="GO:0051286">
    <property type="term" value="C:cell tip"/>
    <property type="evidence" value="ECO:0007005"/>
    <property type="project" value="PomBase"/>
</dbReference>
<dbReference type="GO" id="GO:0000324">
    <property type="term" value="C:fungal-type vacuole"/>
    <property type="evidence" value="ECO:0000314"/>
    <property type="project" value="PomBase"/>
</dbReference>
<dbReference type="GO" id="GO:0005886">
    <property type="term" value="C:plasma membrane"/>
    <property type="evidence" value="ECO:0000314"/>
    <property type="project" value="PomBase"/>
</dbReference>
<dbReference type="GO" id="GO:0005351">
    <property type="term" value="F:carbohydrate:proton symporter activity"/>
    <property type="evidence" value="ECO:0000318"/>
    <property type="project" value="GO_Central"/>
</dbReference>
<dbReference type="GO" id="GO:0034219">
    <property type="term" value="P:carbohydrate transmembrane transport"/>
    <property type="evidence" value="ECO:0000305"/>
    <property type="project" value="PomBase"/>
</dbReference>
<dbReference type="GO" id="GO:0008643">
    <property type="term" value="P:carbohydrate transport"/>
    <property type="evidence" value="ECO:0000318"/>
    <property type="project" value="GO_Central"/>
</dbReference>
<dbReference type="GO" id="GO:0051321">
    <property type="term" value="P:meiotic cell cycle"/>
    <property type="evidence" value="ECO:0007669"/>
    <property type="project" value="UniProtKB-KW"/>
</dbReference>
<dbReference type="CDD" id="cd17356">
    <property type="entry name" value="MFS_HXT"/>
    <property type="match status" value="1"/>
</dbReference>
<dbReference type="FunFam" id="1.20.1250.20:FF:000044">
    <property type="entry name" value="Hexose transporter Hxt3p"/>
    <property type="match status" value="1"/>
</dbReference>
<dbReference type="Gene3D" id="1.20.1250.20">
    <property type="entry name" value="MFS general substrate transporter like domains"/>
    <property type="match status" value="1"/>
</dbReference>
<dbReference type="InterPro" id="IPR020846">
    <property type="entry name" value="MFS_dom"/>
</dbReference>
<dbReference type="InterPro" id="IPR005828">
    <property type="entry name" value="MFS_sugar_transport-like"/>
</dbReference>
<dbReference type="InterPro" id="IPR050360">
    <property type="entry name" value="MFS_Sugar_Transporters"/>
</dbReference>
<dbReference type="InterPro" id="IPR036259">
    <property type="entry name" value="MFS_trans_sf"/>
</dbReference>
<dbReference type="InterPro" id="IPR003663">
    <property type="entry name" value="Sugar/inositol_transpt"/>
</dbReference>
<dbReference type="InterPro" id="IPR005829">
    <property type="entry name" value="Sugar_transporter_CS"/>
</dbReference>
<dbReference type="NCBIfam" id="TIGR00879">
    <property type="entry name" value="SP"/>
    <property type="match status" value="1"/>
</dbReference>
<dbReference type="PANTHER" id="PTHR48022:SF75">
    <property type="entry name" value="GALACTOSE TRANSPORTER-RELATED"/>
    <property type="match status" value="1"/>
</dbReference>
<dbReference type="PANTHER" id="PTHR48022">
    <property type="entry name" value="PLASTIDIC GLUCOSE TRANSPORTER 4"/>
    <property type="match status" value="1"/>
</dbReference>
<dbReference type="Pfam" id="PF00083">
    <property type="entry name" value="Sugar_tr"/>
    <property type="match status" value="1"/>
</dbReference>
<dbReference type="PRINTS" id="PR00171">
    <property type="entry name" value="SUGRTRNSPORT"/>
</dbReference>
<dbReference type="SUPFAM" id="SSF103473">
    <property type="entry name" value="MFS general substrate transporter"/>
    <property type="match status" value="1"/>
</dbReference>
<dbReference type="PROSITE" id="PS50850">
    <property type="entry name" value="MFS"/>
    <property type="match status" value="1"/>
</dbReference>
<dbReference type="PROSITE" id="PS00216">
    <property type="entry name" value="SUGAR_TRANSPORT_1"/>
    <property type="match status" value="1"/>
</dbReference>
<accession>O74849</accession>
<accession>Q96TK9</accession>